<feature type="chain" id="PRO_0000202869" description="RNA exonuclease 1">
    <location>
        <begin position="1"/>
        <end position="553"/>
    </location>
</feature>
<feature type="domain" description="Exonuclease">
    <location>
        <begin position="225"/>
        <end position="373"/>
    </location>
</feature>
<feature type="coiled-coil region" evidence="1">
    <location>
        <begin position="167"/>
        <end position="194"/>
    </location>
</feature>
<feature type="coiled-coil region" evidence="1">
    <location>
        <begin position="509"/>
        <end position="533"/>
    </location>
</feature>
<feature type="modified residue" description="Phosphoserine" evidence="6">
    <location>
        <position position="24"/>
    </location>
</feature>
<feature type="mutagenesis site" description="In REX1-1; impairs 5S rRNA maturation." evidence="4">
    <original>L</original>
    <variation>W</variation>
    <location>
        <position position="305"/>
    </location>
</feature>
<dbReference type="EC" id="3.1.-.-"/>
<dbReference type="EMBL" id="X84098">
    <property type="protein sequence ID" value="CAA58898.1"/>
    <property type="molecule type" value="Genomic_DNA"/>
</dbReference>
<dbReference type="EMBL" id="Z73061">
    <property type="protein sequence ID" value="CAA97306.1"/>
    <property type="molecule type" value="Genomic_DNA"/>
</dbReference>
<dbReference type="EMBL" id="Z73062">
    <property type="protein sequence ID" value="CAA97308.1"/>
    <property type="molecule type" value="Genomic_DNA"/>
</dbReference>
<dbReference type="EMBL" id="BK006941">
    <property type="protein sequence ID" value="DAA08364.1"/>
    <property type="molecule type" value="Genomic_DNA"/>
</dbReference>
<dbReference type="PIR" id="S64609">
    <property type="entry name" value="S64609"/>
</dbReference>
<dbReference type="RefSeq" id="NP_011792.1">
    <property type="nucleotide sequence ID" value="NM_001181405.1"/>
</dbReference>
<dbReference type="BioGRID" id="33526">
    <property type="interactions" value="147"/>
</dbReference>
<dbReference type="DIP" id="DIP-5564N"/>
<dbReference type="FunCoup" id="P53331">
    <property type="interactions" value="274"/>
</dbReference>
<dbReference type="IntAct" id="P53331">
    <property type="interactions" value="2"/>
</dbReference>
<dbReference type="MINT" id="P53331"/>
<dbReference type="STRING" id="4932.YGR276C"/>
<dbReference type="GlyGen" id="P53331">
    <property type="glycosylation" value="1 site"/>
</dbReference>
<dbReference type="iPTMnet" id="P53331"/>
<dbReference type="PaxDb" id="4932-YGR276C"/>
<dbReference type="PeptideAtlas" id="P53331"/>
<dbReference type="EnsemblFungi" id="YGR276C_mRNA">
    <property type="protein sequence ID" value="YGR276C"/>
    <property type="gene ID" value="YGR276C"/>
</dbReference>
<dbReference type="GeneID" id="853193"/>
<dbReference type="KEGG" id="sce:YGR276C"/>
<dbReference type="AGR" id="SGD:S000003508"/>
<dbReference type="SGD" id="S000003508">
    <property type="gene designation" value="RNH70"/>
</dbReference>
<dbReference type="VEuPathDB" id="FungiDB:YGR276C"/>
<dbReference type="eggNOG" id="KOG2248">
    <property type="taxonomic scope" value="Eukaryota"/>
</dbReference>
<dbReference type="HOGENOM" id="CLU_008679_2_1_1"/>
<dbReference type="InParanoid" id="P53331"/>
<dbReference type="OMA" id="HKAGPPF"/>
<dbReference type="OrthoDB" id="206335at2759"/>
<dbReference type="BioCyc" id="YEAST:G3O-30941-MONOMER"/>
<dbReference type="BioGRID-ORCS" id="853193">
    <property type="hits" value="0 hits in 10 CRISPR screens"/>
</dbReference>
<dbReference type="PRO" id="PR:P53331"/>
<dbReference type="Proteomes" id="UP000002311">
    <property type="component" value="Chromosome VII"/>
</dbReference>
<dbReference type="RNAct" id="P53331">
    <property type="molecule type" value="protein"/>
</dbReference>
<dbReference type="GO" id="GO:0005634">
    <property type="term" value="C:nucleus"/>
    <property type="evidence" value="ECO:0000314"/>
    <property type="project" value="SGD"/>
</dbReference>
<dbReference type="GO" id="GO:0008408">
    <property type="term" value="F:3'-5' exonuclease activity"/>
    <property type="evidence" value="ECO:0000250"/>
    <property type="project" value="SGD"/>
</dbReference>
<dbReference type="GO" id="GO:0000175">
    <property type="term" value="F:3'-5'-RNA exonuclease activity"/>
    <property type="evidence" value="ECO:0000315"/>
    <property type="project" value="SGD"/>
</dbReference>
<dbReference type="GO" id="GO:0004527">
    <property type="term" value="F:exonuclease activity"/>
    <property type="evidence" value="ECO:0000318"/>
    <property type="project" value="GO_Central"/>
</dbReference>
<dbReference type="GO" id="GO:0003723">
    <property type="term" value="F:RNA binding"/>
    <property type="evidence" value="ECO:0007669"/>
    <property type="project" value="UniProtKB-KW"/>
</dbReference>
<dbReference type="GO" id="GO:0000467">
    <property type="term" value="P:exonucleolytic trimming to generate mature 3'-end of 5.8S rRNA from tricistronic rRNA transcript (SSU-rRNA, 5.8S rRNA, LSU-rRNA)"/>
    <property type="evidence" value="ECO:0000316"/>
    <property type="project" value="SGD"/>
</dbReference>
<dbReference type="GO" id="GO:0002107">
    <property type="term" value="P:generation of mature 3'-end of 5S rRNA generated by RNA polymerase III"/>
    <property type="evidence" value="ECO:0000315"/>
    <property type="project" value="SGD"/>
</dbReference>
<dbReference type="GO" id="GO:0031125">
    <property type="term" value="P:rRNA 3'-end processing"/>
    <property type="evidence" value="ECO:0000318"/>
    <property type="project" value="GO_Central"/>
</dbReference>
<dbReference type="GO" id="GO:0042780">
    <property type="term" value="P:tRNA 3'-end processing"/>
    <property type="evidence" value="ECO:0000315"/>
    <property type="project" value="SGD"/>
</dbReference>
<dbReference type="GO" id="GO:0034476">
    <property type="term" value="P:U5 snRNA 3'-end processing"/>
    <property type="evidence" value="ECO:0000316"/>
    <property type="project" value="SGD"/>
</dbReference>
<dbReference type="CDD" id="cd06145">
    <property type="entry name" value="REX1_like"/>
    <property type="match status" value="1"/>
</dbReference>
<dbReference type="FunFam" id="3.30.420.10:FF:000019">
    <property type="entry name" value="RNA exonuclease NEF-sp"/>
    <property type="match status" value="1"/>
</dbReference>
<dbReference type="Gene3D" id="3.30.420.10">
    <property type="entry name" value="Ribonuclease H-like superfamily/Ribonuclease H"/>
    <property type="match status" value="1"/>
</dbReference>
<dbReference type="InterPro" id="IPR013520">
    <property type="entry name" value="Exonuclease_RNaseT/DNA_pol3"/>
</dbReference>
<dbReference type="InterPro" id="IPR034922">
    <property type="entry name" value="REX1-like_exo"/>
</dbReference>
<dbReference type="InterPro" id="IPR047021">
    <property type="entry name" value="REXO1/3/4-like"/>
</dbReference>
<dbReference type="InterPro" id="IPR012337">
    <property type="entry name" value="RNaseH-like_sf"/>
</dbReference>
<dbReference type="InterPro" id="IPR036397">
    <property type="entry name" value="RNaseH_sf"/>
</dbReference>
<dbReference type="PANTHER" id="PTHR12801:SF115">
    <property type="entry name" value="FI18136P1-RELATED"/>
    <property type="match status" value="1"/>
</dbReference>
<dbReference type="PANTHER" id="PTHR12801">
    <property type="entry name" value="RNA EXONUCLEASE REXO1 / RECO3 FAMILY MEMBER-RELATED"/>
    <property type="match status" value="1"/>
</dbReference>
<dbReference type="Pfam" id="PF00929">
    <property type="entry name" value="RNase_T"/>
    <property type="match status" value="1"/>
</dbReference>
<dbReference type="SMART" id="SM00479">
    <property type="entry name" value="EXOIII"/>
    <property type="match status" value="1"/>
</dbReference>
<dbReference type="SUPFAM" id="SSF53098">
    <property type="entry name" value="Ribonuclease H-like"/>
    <property type="match status" value="1"/>
</dbReference>
<accession>P53331</accession>
<accession>D6VV53</accession>
<sequence>MQVEGPDTNFVSDLALGSKKRRLSKTSVQEDDHTNVVSEVNKNKKKKKAKPMTCTLLKSVVEKGIGIKDVRDMTQYLLQAENNSPKWIDICNRSSLQKMIVLFIPGLQPDDFENGKNTFNEISDDNFKYIPGEIASTFHTFPVMAPGSKMTLFSPYNSFINVGLSKMEKINKLKELQKKKKITINDLVLSEQQLVANDYPLDSGDTNFDTDWVQTVDFTHGGSHIFALDCEMCLSEQGLVLTRISLVNFDNEVIYEELVKPDVPIVDYLTRYSGITEEKLTVGAKKTLREVQKDLLKIISRSDILIGHSLQNDLKVMKLKHPLVVDTAIIYHHKAGDPFKPSLKYLSETFLNKSIQNGEHDSVEDARACLELTKLKILNGLAFGIGINTENLFTKLHRFEVKTVLLNDMIIKNHTEDDSKGQLIRCVEDDETWTHIHENLNKDVKLIVGRIKNLERSRNYNKKPRKETPSFDASMVLHDIGQHLTQLYENATPGTMILIMSGTGDTRPWNNLSTELEFIQDKKERLDKRREREPEIVEAIKLARGGVASFTVK</sequence>
<proteinExistence type="evidence at protein level"/>
<protein>
    <recommendedName>
        <fullName>RNA exonuclease 1</fullName>
        <ecNumber>3.1.-.-</ecNumber>
    </recommendedName>
    <alternativeName>
        <fullName>RNase H(70)</fullName>
    </alternativeName>
</protein>
<keyword id="KW-0175">Coiled coil</keyword>
<keyword id="KW-0903">Direct protein sequencing</keyword>
<keyword id="KW-0269">Exonuclease</keyword>
<keyword id="KW-0378">Hydrolase</keyword>
<keyword id="KW-0540">Nuclease</keyword>
<keyword id="KW-0539">Nucleus</keyword>
<keyword id="KW-0597">Phosphoprotein</keyword>
<keyword id="KW-1185">Reference proteome</keyword>
<keyword id="KW-0690">Ribosome biogenesis</keyword>
<keyword id="KW-0694">RNA-binding</keyword>
<keyword id="KW-0698">rRNA processing</keyword>
<keyword id="KW-0819">tRNA processing</keyword>
<organism>
    <name type="scientific">Saccharomyces cerevisiae (strain ATCC 204508 / S288c)</name>
    <name type="common">Baker's yeast</name>
    <dbReference type="NCBI Taxonomy" id="559292"/>
    <lineage>
        <taxon>Eukaryota</taxon>
        <taxon>Fungi</taxon>
        <taxon>Dikarya</taxon>
        <taxon>Ascomycota</taxon>
        <taxon>Saccharomycotina</taxon>
        <taxon>Saccharomycetes</taxon>
        <taxon>Saccharomycetales</taxon>
        <taxon>Saccharomycetaceae</taxon>
        <taxon>Saccharomyces</taxon>
    </lineage>
</organism>
<name>REXO1_YEAST</name>
<gene>
    <name type="primary">RNH70</name>
    <name type="synonym">REX1</name>
    <name type="ordered locus">YGR276C</name>
    <name type="ORF">G9381</name>
</gene>
<evidence type="ECO:0000255" key="1"/>
<evidence type="ECO:0000269" key="2">
    <source>
    </source>
</evidence>
<evidence type="ECO:0000269" key="3">
    <source>
    </source>
</evidence>
<evidence type="ECO:0000269" key="4">
    <source>
    </source>
</evidence>
<evidence type="ECO:0000305" key="5"/>
<evidence type="ECO:0007744" key="6">
    <source>
    </source>
</evidence>
<comment type="function">
    <text evidence="2 3 4">3' exoribonuclease required for 5S rRNA maturation and for the proper maturation of the 5' cistron of the tRNA-Arg3 dicistronic gene. Involved with REX2 in the maturation of the 5.8S rRNA, and with REX2 and REX3, in the 3' processing of the U5L snRNA.</text>
</comment>
<comment type="subcellular location">
    <subcellularLocation>
        <location evidence="2">Nucleus</location>
    </subcellularLocation>
</comment>
<comment type="similarity">
    <text evidence="5">Belongs to the REXO1/REXO3 family.</text>
</comment>
<reference key="1">
    <citation type="journal article" date="1997" name="Yeast">
        <title>The sequence of a 8 kb segment on the right arm of yeast chromosome VII identifies four new open reading frames and the genes for yTAFII145.</title>
        <authorList>
            <person name="Ruzzi M."/>
            <person name="Marconi A."/>
            <person name="Saliola M."/>
            <person name="Fabiani L."/>
            <person name="Montebove F."/>
            <person name="Frontali L."/>
        </authorList>
    </citation>
    <scope>NUCLEOTIDE SEQUENCE [GENOMIC DNA]</scope>
    <source>
        <strain>ATCC 204508 / S288c</strain>
    </source>
</reference>
<reference key="2">
    <citation type="journal article" date="1997" name="Nature">
        <title>The nucleotide sequence of Saccharomyces cerevisiae chromosome VII.</title>
        <authorList>
            <person name="Tettelin H."/>
            <person name="Agostoni-Carbone M.L."/>
            <person name="Albermann K."/>
            <person name="Albers M."/>
            <person name="Arroyo J."/>
            <person name="Backes U."/>
            <person name="Barreiros T."/>
            <person name="Bertani I."/>
            <person name="Bjourson A.J."/>
            <person name="Brueckner M."/>
            <person name="Bruschi C.V."/>
            <person name="Carignani G."/>
            <person name="Castagnoli L."/>
            <person name="Cerdan E."/>
            <person name="Clemente M.L."/>
            <person name="Coblenz A."/>
            <person name="Coglievina M."/>
            <person name="Coissac E."/>
            <person name="Defoor E."/>
            <person name="Del Bino S."/>
            <person name="Delius H."/>
            <person name="Delneri D."/>
            <person name="de Wergifosse P."/>
            <person name="Dujon B."/>
            <person name="Durand P."/>
            <person name="Entian K.-D."/>
            <person name="Eraso P."/>
            <person name="Escribano V."/>
            <person name="Fabiani L."/>
            <person name="Fartmann B."/>
            <person name="Feroli F."/>
            <person name="Feuermann M."/>
            <person name="Frontali L."/>
            <person name="Garcia-Gonzalez M."/>
            <person name="Garcia-Saez M.I."/>
            <person name="Goffeau A."/>
            <person name="Guerreiro P."/>
            <person name="Hani J."/>
            <person name="Hansen M."/>
            <person name="Hebling U."/>
            <person name="Hernandez K."/>
            <person name="Heumann K."/>
            <person name="Hilger F."/>
            <person name="Hofmann B."/>
            <person name="Indge K.J."/>
            <person name="James C.M."/>
            <person name="Klima R."/>
            <person name="Koetter P."/>
            <person name="Kramer B."/>
            <person name="Kramer W."/>
            <person name="Lauquin G."/>
            <person name="Leuther H."/>
            <person name="Louis E.J."/>
            <person name="Maillier E."/>
            <person name="Marconi A."/>
            <person name="Martegani E."/>
            <person name="Mazon M.J."/>
            <person name="Mazzoni C."/>
            <person name="McReynolds A.D.K."/>
            <person name="Melchioretto P."/>
            <person name="Mewes H.-W."/>
            <person name="Minenkova O."/>
            <person name="Mueller-Auer S."/>
            <person name="Nawrocki A."/>
            <person name="Netter P."/>
            <person name="Neu R."/>
            <person name="Nombela C."/>
            <person name="Oliver S.G."/>
            <person name="Panzeri L."/>
            <person name="Paoluzi S."/>
            <person name="Plevani P."/>
            <person name="Portetelle D."/>
            <person name="Portillo F."/>
            <person name="Potier S."/>
            <person name="Purnelle B."/>
            <person name="Rieger M."/>
            <person name="Riles L."/>
            <person name="Rinaldi T."/>
            <person name="Robben J."/>
            <person name="Rodrigues-Pousada C."/>
            <person name="Rodriguez-Belmonte E."/>
            <person name="Rodriguez-Torres A.M."/>
            <person name="Rose M."/>
            <person name="Ruzzi M."/>
            <person name="Saliola M."/>
            <person name="Sanchez-Perez M."/>
            <person name="Schaefer B."/>
            <person name="Schaefer M."/>
            <person name="Scharfe M."/>
            <person name="Schmidheini T."/>
            <person name="Schreer A."/>
            <person name="Skala J."/>
            <person name="Souciet J.-L."/>
            <person name="Steensma H.Y."/>
            <person name="Talla E."/>
            <person name="Thierry A."/>
            <person name="Vandenbol M."/>
            <person name="van der Aart Q.J.M."/>
            <person name="Van Dyck L."/>
            <person name="Vanoni M."/>
            <person name="Verhasselt P."/>
            <person name="Voet M."/>
            <person name="Volckaert G."/>
            <person name="Wambutt R."/>
            <person name="Watson M.D."/>
            <person name="Weber N."/>
            <person name="Wedler E."/>
            <person name="Wedler H."/>
            <person name="Wipfli P."/>
            <person name="Wolf K."/>
            <person name="Wright L.F."/>
            <person name="Zaccaria P."/>
            <person name="Zimmermann M."/>
            <person name="Zollner A."/>
            <person name="Kleine K."/>
        </authorList>
    </citation>
    <scope>NUCLEOTIDE SEQUENCE [LARGE SCALE GENOMIC DNA]</scope>
    <source>
        <strain>ATCC 204508 / S288c</strain>
    </source>
</reference>
<reference key="3">
    <citation type="journal article" date="2014" name="G3 (Bethesda)">
        <title>The reference genome sequence of Saccharomyces cerevisiae: Then and now.</title>
        <authorList>
            <person name="Engel S.R."/>
            <person name="Dietrich F.S."/>
            <person name="Fisk D.G."/>
            <person name="Binkley G."/>
            <person name="Balakrishnan R."/>
            <person name="Costanzo M.C."/>
            <person name="Dwight S.S."/>
            <person name="Hitz B.C."/>
            <person name="Karra K."/>
            <person name="Nash R.S."/>
            <person name="Weng S."/>
            <person name="Wong E.D."/>
            <person name="Lloyd P."/>
            <person name="Skrzypek M.S."/>
            <person name="Miyasato S.R."/>
            <person name="Simison M."/>
            <person name="Cherry J.M."/>
        </authorList>
    </citation>
    <scope>GENOME REANNOTATION</scope>
    <source>
        <strain>ATCC 204508 / S288c</strain>
    </source>
</reference>
<reference key="4">
    <citation type="journal article" date="1999" name="FEBS Lett.">
        <title>Purification of Saccharomyces cerevisiae RNase H(70) and identification of the corresponding gene.</title>
        <authorList>
            <person name="Frank P."/>
            <person name="Braunshofer-Reiter C."/>
            <person name="Karwan A."/>
            <person name="Grimm R."/>
            <person name="Wintersberger U."/>
        </authorList>
    </citation>
    <scope>PARTIAL PROTEIN SEQUENCE</scope>
    <scope>FUNCTION</scope>
    <scope>SUBCELLULAR LOCATION</scope>
</reference>
<reference key="5">
    <citation type="journal article" date="2000" name="EMBO J.">
        <title>Three conserved members of the RNase D family have unique and overlapping functions in the processing of 5S, 5.8S, U4, U5, RNase MRP and RNase P RNAs in yeast.</title>
        <authorList>
            <person name="van Hoof A."/>
            <person name="Lennertz P."/>
            <person name="Parker R."/>
        </authorList>
    </citation>
    <scope>FUNCTION</scope>
</reference>
<reference key="6">
    <citation type="journal article" date="2005" name="Nucleic Acids Res.">
        <title>Synergistic defect in 60S ribosomal subunit assembly caused by a mutation of Rrs1p, a ribosomal protein L11-binding protein, and 3'-extension of 5S rRNA in Saccharomyces cerevisiae.</title>
        <authorList>
            <person name="Nariai M."/>
            <person name="Tanaka T."/>
            <person name="Okada T."/>
            <person name="Shirai C."/>
            <person name="Horigome C."/>
            <person name="Mizuta K."/>
        </authorList>
    </citation>
    <scope>FUNCTION</scope>
    <scope>MUTAGENESIS OF LEU-305</scope>
</reference>
<reference key="7">
    <citation type="journal article" date="2007" name="J. Proteome Res.">
        <title>Large-scale phosphorylation analysis of alpha-factor-arrested Saccharomyces cerevisiae.</title>
        <authorList>
            <person name="Li X."/>
            <person name="Gerber S.A."/>
            <person name="Rudner A.D."/>
            <person name="Beausoleil S.A."/>
            <person name="Haas W."/>
            <person name="Villen J."/>
            <person name="Elias J.E."/>
            <person name="Gygi S.P."/>
        </authorList>
    </citation>
    <scope>IDENTIFICATION BY MASS SPECTROMETRY [LARGE SCALE ANALYSIS]</scope>
    <source>
        <strain>ADR376</strain>
    </source>
</reference>
<reference key="8">
    <citation type="journal article" date="2008" name="Mol. Cell. Proteomics">
        <title>A multidimensional chromatography technology for in-depth phosphoproteome analysis.</title>
        <authorList>
            <person name="Albuquerque C.P."/>
            <person name="Smolka M.B."/>
            <person name="Payne S.H."/>
            <person name="Bafna V."/>
            <person name="Eng J."/>
            <person name="Zhou H."/>
        </authorList>
    </citation>
    <scope>IDENTIFICATION BY MASS SPECTROMETRY [LARGE SCALE ANALYSIS]</scope>
</reference>
<reference key="9">
    <citation type="journal article" date="2009" name="Science">
        <title>Global analysis of Cdk1 substrate phosphorylation sites provides insights into evolution.</title>
        <authorList>
            <person name="Holt L.J."/>
            <person name="Tuch B.B."/>
            <person name="Villen J."/>
            <person name="Johnson A.D."/>
            <person name="Gygi S.P."/>
            <person name="Morgan D.O."/>
        </authorList>
    </citation>
    <scope>PHOSPHORYLATION [LARGE SCALE ANALYSIS] AT SER-24</scope>
    <scope>IDENTIFICATION BY MASS SPECTROMETRY [LARGE SCALE ANALYSIS]</scope>
</reference>
<reference key="10">
    <citation type="journal article" date="2012" name="Proc. Natl. Acad. Sci. U.S.A.">
        <title>N-terminal acetylome analyses and functional insights of the N-terminal acetyltransferase NatB.</title>
        <authorList>
            <person name="Van Damme P."/>
            <person name="Lasa M."/>
            <person name="Polevoda B."/>
            <person name="Gazquez C."/>
            <person name="Elosegui-Artola A."/>
            <person name="Kim D.S."/>
            <person name="De Juan-Pardo E."/>
            <person name="Demeyer K."/>
            <person name="Hole K."/>
            <person name="Larrea E."/>
            <person name="Timmerman E."/>
            <person name="Prieto J."/>
            <person name="Arnesen T."/>
            <person name="Sherman F."/>
            <person name="Gevaert K."/>
            <person name="Aldabe R."/>
        </authorList>
    </citation>
    <scope>IDENTIFICATION BY MASS SPECTROMETRY [LARGE SCALE ANALYSIS]</scope>
</reference>